<dbReference type="EMBL" id="LT708304">
    <property type="protein sequence ID" value="SIU02285.1"/>
    <property type="molecule type" value="Genomic_DNA"/>
</dbReference>
<dbReference type="RefSeq" id="NP_857296.1">
    <property type="nucleotide sequence ID" value="NC_002945.3"/>
</dbReference>
<dbReference type="RefSeq" id="WP_003419601.1">
    <property type="nucleotide sequence ID" value="NC_002945.4"/>
</dbReference>
<dbReference type="SMR" id="P67773"/>
<dbReference type="KEGG" id="mbo:BQ2027_MB3657"/>
<dbReference type="PATRIC" id="fig|233413.5.peg.4002"/>
<dbReference type="Proteomes" id="UP000001419">
    <property type="component" value="Chromosome"/>
</dbReference>
<dbReference type="GO" id="GO:0016706">
    <property type="term" value="F:2-oxoglutarate-dependent dioxygenase activity"/>
    <property type="evidence" value="ECO:0007669"/>
    <property type="project" value="UniProtKB-ARBA"/>
</dbReference>
<dbReference type="GO" id="GO:0005506">
    <property type="term" value="F:iron ion binding"/>
    <property type="evidence" value="ECO:0007669"/>
    <property type="project" value="UniProtKB-ARBA"/>
</dbReference>
<dbReference type="FunFam" id="2.60.120.620:FF:000028">
    <property type="entry name" value="Phytanoyl-CoA dioxygenase"/>
    <property type="match status" value="1"/>
</dbReference>
<dbReference type="Gene3D" id="2.60.120.620">
    <property type="entry name" value="q2cbj1_9rhob like domain"/>
    <property type="match status" value="1"/>
</dbReference>
<dbReference type="InterPro" id="IPR008775">
    <property type="entry name" value="Phytyl_CoA_dOase-like"/>
</dbReference>
<dbReference type="PANTHER" id="PTHR20883:SF48">
    <property type="entry name" value="ECTOINE DIOXYGENASE"/>
    <property type="match status" value="1"/>
</dbReference>
<dbReference type="PANTHER" id="PTHR20883">
    <property type="entry name" value="PHYTANOYL-COA DIOXYGENASE DOMAIN CONTAINING 1"/>
    <property type="match status" value="1"/>
</dbReference>
<dbReference type="Pfam" id="PF05721">
    <property type="entry name" value="PhyH"/>
    <property type="match status" value="1"/>
</dbReference>
<dbReference type="SUPFAM" id="SSF51197">
    <property type="entry name" value="Clavaminate synthase-like"/>
    <property type="match status" value="1"/>
</dbReference>
<name>Y3657_MYCBO</name>
<feature type="chain" id="PRO_0000215237" description="Uncharacterized protein Mb3657">
    <location>
        <begin position="1"/>
        <end position="291"/>
    </location>
</feature>
<evidence type="ECO:0000305" key="1"/>
<gene>
    <name type="ordered locus">BQ2027_MB3657</name>
</gene>
<keyword id="KW-1185">Reference proteome</keyword>
<comment type="similarity">
    <text evidence="1">Belongs to the PhyH family.</text>
</comment>
<organism>
    <name type="scientific">Mycobacterium bovis (strain ATCC BAA-935 / AF2122/97)</name>
    <dbReference type="NCBI Taxonomy" id="233413"/>
    <lineage>
        <taxon>Bacteria</taxon>
        <taxon>Bacillati</taxon>
        <taxon>Actinomycetota</taxon>
        <taxon>Actinomycetes</taxon>
        <taxon>Mycobacteriales</taxon>
        <taxon>Mycobacteriaceae</taxon>
        <taxon>Mycobacterium</taxon>
        <taxon>Mycobacterium tuberculosis complex</taxon>
    </lineage>
</organism>
<reference key="1">
    <citation type="journal article" date="2003" name="Proc. Natl. Acad. Sci. U.S.A.">
        <title>The complete genome sequence of Mycobacterium bovis.</title>
        <authorList>
            <person name="Garnier T."/>
            <person name="Eiglmeier K."/>
            <person name="Camus J.-C."/>
            <person name="Medina N."/>
            <person name="Mansoor H."/>
            <person name="Pryor M."/>
            <person name="Duthoy S."/>
            <person name="Grondin S."/>
            <person name="Lacroix C."/>
            <person name="Monsempe C."/>
            <person name="Simon S."/>
            <person name="Harris B."/>
            <person name="Atkin R."/>
            <person name="Doggett J."/>
            <person name="Mayes R."/>
            <person name="Keating L."/>
            <person name="Wheeler P.R."/>
            <person name="Parkhill J."/>
            <person name="Barrell B.G."/>
            <person name="Cole S.T."/>
            <person name="Gordon S.V."/>
            <person name="Hewinson R.G."/>
        </authorList>
    </citation>
    <scope>NUCLEOTIDE SEQUENCE [LARGE SCALE GENOMIC DNA]</scope>
    <source>
        <strain>ATCC BAA-935 / AF2122/97</strain>
    </source>
</reference>
<reference key="2">
    <citation type="journal article" date="2017" name="Genome Announc.">
        <title>Updated reference genome sequence and annotation of Mycobacterium bovis AF2122/97.</title>
        <authorList>
            <person name="Malone K.M."/>
            <person name="Farrell D."/>
            <person name="Stuber T.P."/>
            <person name="Schubert O.T."/>
            <person name="Aebersold R."/>
            <person name="Robbe-Austerman S."/>
            <person name="Gordon S.V."/>
        </authorList>
    </citation>
    <scope>NUCLEOTIDE SEQUENCE [LARGE SCALE GENOMIC DNA]</scope>
    <scope>GENOME REANNOTATION</scope>
    <source>
        <strain>ATCC BAA-935 / AF2122/97</strain>
    </source>
</reference>
<accession>P67773</accession>
<accession>A0A1R3Y6B2</accession>
<accession>O06374</accession>
<accession>X2BP77</accession>
<sequence length="291" mass="32447">MTQSSSVERLVGEIDEFGYTVVEDVLDADSVAAYLADTRRLERELPTVIANSTTVVKGLARPGHVPVDRVDHDWVRIDNLLLHGTRYEALPVHPKLLPVIEGVLGRDCLLSWCMTSNQLPGAVAQRLHCDDEMYPLPRPHQPLLCNALIALCDFTADNGATQVVPGSHRWPERPSPPYPEGKPVEINAGDALIWNGSLWHTAAANRTDAPRPALTINFCVGFVRQQVNQQLSIPRELVRCFEPRLQELIGYGLYAGKMGRIDWRPPADYLDADRHPFLDAVADRLQTSVRL</sequence>
<proteinExistence type="inferred from homology"/>
<protein>
    <recommendedName>
        <fullName>Uncharacterized protein Mb3657</fullName>
    </recommendedName>
</protein>